<proteinExistence type="inferred from homology"/>
<protein>
    <recommendedName>
        <fullName evidence="1">Regulator of ribonuclease activity A</fullName>
    </recommendedName>
</protein>
<sequence length="161" mass="17315">MKYDTSDLCDIYHEEVNVVEPLFSNFGGRTSFGGKITTVKCFEDNGLLFDLLEENGLGRVLVVDGGGSVRRALINAELAELALKNEWEGIVVYGAVRQVDDLAELDIGIQAMAAIPVGAADEGVGESDIRVNFGGVTFFSGDHLYADNTGIILSEDPLDIE</sequence>
<keyword id="KW-0963">Cytoplasm</keyword>
<feature type="chain" id="PRO_1000060384" description="Regulator of ribonuclease activity A">
    <location>
        <begin position="1"/>
        <end position="161"/>
    </location>
</feature>
<accession>A7FCY2</accession>
<name>RRAA_YERP3</name>
<dbReference type="EMBL" id="CP000720">
    <property type="protein sequence ID" value="ABS49860.1"/>
    <property type="molecule type" value="Genomic_DNA"/>
</dbReference>
<dbReference type="RefSeq" id="WP_002208945.1">
    <property type="nucleotide sequence ID" value="NC_009708.1"/>
</dbReference>
<dbReference type="SMR" id="A7FCY2"/>
<dbReference type="GeneID" id="57974491"/>
<dbReference type="KEGG" id="ypi:YpsIP31758_0110"/>
<dbReference type="HOGENOM" id="CLU_072626_4_0_6"/>
<dbReference type="Proteomes" id="UP000002412">
    <property type="component" value="Chromosome"/>
</dbReference>
<dbReference type="GO" id="GO:0005829">
    <property type="term" value="C:cytosol"/>
    <property type="evidence" value="ECO:0007669"/>
    <property type="project" value="TreeGrafter"/>
</dbReference>
<dbReference type="GO" id="GO:0060698">
    <property type="term" value="F:endoribonuclease inhibitor activity"/>
    <property type="evidence" value="ECO:0007669"/>
    <property type="project" value="UniProtKB-UniRule"/>
</dbReference>
<dbReference type="GO" id="GO:0019899">
    <property type="term" value="F:enzyme binding"/>
    <property type="evidence" value="ECO:0007669"/>
    <property type="project" value="UniProtKB-UniRule"/>
</dbReference>
<dbReference type="GO" id="GO:1902369">
    <property type="term" value="P:negative regulation of RNA catabolic process"/>
    <property type="evidence" value="ECO:0007669"/>
    <property type="project" value="TreeGrafter"/>
</dbReference>
<dbReference type="CDD" id="cd16841">
    <property type="entry name" value="RraA_family"/>
    <property type="match status" value="1"/>
</dbReference>
<dbReference type="Gene3D" id="3.50.30.40">
    <property type="entry name" value="Ribonuclease E inhibitor RraA/RraA-like"/>
    <property type="match status" value="1"/>
</dbReference>
<dbReference type="HAMAP" id="MF_00471">
    <property type="entry name" value="RraA"/>
    <property type="match status" value="1"/>
</dbReference>
<dbReference type="InterPro" id="IPR010203">
    <property type="entry name" value="RraA"/>
</dbReference>
<dbReference type="InterPro" id="IPR005493">
    <property type="entry name" value="RraA/RraA-like"/>
</dbReference>
<dbReference type="InterPro" id="IPR036704">
    <property type="entry name" value="RraA/RraA-like_sf"/>
</dbReference>
<dbReference type="InterPro" id="IPR014339">
    <property type="entry name" value="RraA_gpbac"/>
</dbReference>
<dbReference type="NCBIfam" id="TIGR01935">
    <property type="entry name" value="NOT-MenG"/>
    <property type="match status" value="1"/>
</dbReference>
<dbReference type="NCBIfam" id="NF006875">
    <property type="entry name" value="PRK09372.1"/>
    <property type="match status" value="1"/>
</dbReference>
<dbReference type="NCBIfam" id="TIGR02998">
    <property type="entry name" value="RraA_entero"/>
    <property type="match status" value="1"/>
</dbReference>
<dbReference type="PANTHER" id="PTHR33254">
    <property type="entry name" value="4-HYDROXY-4-METHYL-2-OXOGLUTARATE ALDOLASE 3-RELATED"/>
    <property type="match status" value="1"/>
</dbReference>
<dbReference type="PANTHER" id="PTHR33254:SF29">
    <property type="entry name" value="REGULATOR OF RIBONUCLEASE ACTIVITY A"/>
    <property type="match status" value="1"/>
</dbReference>
<dbReference type="Pfam" id="PF03737">
    <property type="entry name" value="RraA-like"/>
    <property type="match status" value="1"/>
</dbReference>
<dbReference type="SUPFAM" id="SSF89562">
    <property type="entry name" value="RraA-like"/>
    <property type="match status" value="1"/>
</dbReference>
<reference key="1">
    <citation type="journal article" date="2007" name="PLoS Genet.">
        <title>The complete genome sequence of Yersinia pseudotuberculosis IP31758, the causative agent of Far East scarlet-like fever.</title>
        <authorList>
            <person name="Eppinger M."/>
            <person name="Rosovitz M.J."/>
            <person name="Fricke W.F."/>
            <person name="Rasko D.A."/>
            <person name="Kokorina G."/>
            <person name="Fayolle C."/>
            <person name="Lindler L.E."/>
            <person name="Carniel E."/>
            <person name="Ravel J."/>
        </authorList>
    </citation>
    <scope>NUCLEOTIDE SEQUENCE [LARGE SCALE GENOMIC DNA]</scope>
    <source>
        <strain>IP 31758</strain>
    </source>
</reference>
<organism>
    <name type="scientific">Yersinia pseudotuberculosis serotype O:1b (strain IP 31758)</name>
    <dbReference type="NCBI Taxonomy" id="349747"/>
    <lineage>
        <taxon>Bacteria</taxon>
        <taxon>Pseudomonadati</taxon>
        <taxon>Pseudomonadota</taxon>
        <taxon>Gammaproteobacteria</taxon>
        <taxon>Enterobacterales</taxon>
        <taxon>Yersiniaceae</taxon>
        <taxon>Yersinia</taxon>
    </lineage>
</organism>
<gene>
    <name evidence="1" type="primary">rraA</name>
    <name type="ordered locus">YpsIP31758_0110</name>
</gene>
<evidence type="ECO:0000255" key="1">
    <source>
        <dbReference type="HAMAP-Rule" id="MF_00471"/>
    </source>
</evidence>
<comment type="function">
    <text evidence="1">Globally modulates RNA abundance by binding to RNase E (Rne) and regulating its endonucleolytic activity. Can modulate Rne action in a substrate-dependent manner by altering the composition of the degradosome. Modulates RNA-binding and helicase activities of the degradosome.</text>
</comment>
<comment type="subunit">
    <text evidence="1">Homotrimer. Binds to both RNA-binding sites in the C-terminal region of Rne and to RhlB.</text>
</comment>
<comment type="subcellular location">
    <subcellularLocation>
        <location evidence="1">Cytoplasm</location>
    </subcellularLocation>
</comment>
<comment type="similarity">
    <text evidence="1">Belongs to the RraA family.</text>
</comment>